<evidence type="ECO:0000255" key="1">
    <source>
        <dbReference type="HAMAP-Rule" id="MF_01367"/>
    </source>
</evidence>
<evidence type="ECO:0000305" key="2"/>
<feature type="chain" id="PRO_1000214978" description="Large ribosomal subunit protein uL14">
    <location>
        <begin position="1"/>
        <end position="122"/>
    </location>
</feature>
<comment type="function">
    <text evidence="1">Binds to 23S rRNA. Forms part of two intersubunit bridges in the 70S ribosome.</text>
</comment>
<comment type="subunit">
    <text evidence="1">Part of the 50S ribosomal subunit. Forms a cluster with proteins L3 and L19. In the 70S ribosome, L14 and L19 interact and together make contacts with the 16S rRNA in bridges B5 and B8.</text>
</comment>
<comment type="similarity">
    <text evidence="1">Belongs to the universal ribosomal protein uL14 family.</text>
</comment>
<sequence length="122" mass="13266">MVQQESRLKVADNTGAKELLVIRVMGGSTRRYANIGDVIVATVKDATPGGVVKKGDVVKAVVVRSVKGARRKDGSYIKFDENAAVIIKDDKTPKGTRIFGPVARELREKQFMKIVSLAPEVL</sequence>
<proteinExistence type="inferred from homology"/>
<reference key="1">
    <citation type="journal article" date="2009" name="Proc. Natl. Acad. Sci. U.S.A.">
        <title>Characterizing a model human gut microbiota composed of members of its two dominant bacterial phyla.</title>
        <authorList>
            <person name="Mahowald M.A."/>
            <person name="Rey F.E."/>
            <person name="Seedorf H."/>
            <person name="Turnbaugh P.J."/>
            <person name="Fulton R.S."/>
            <person name="Wollam A."/>
            <person name="Shah N."/>
            <person name="Wang C."/>
            <person name="Magrini V."/>
            <person name="Wilson R.K."/>
            <person name="Cantarel B.L."/>
            <person name="Coutinho P.M."/>
            <person name="Henrissat B."/>
            <person name="Crock L.W."/>
            <person name="Russell A."/>
            <person name="Verberkmoes N.C."/>
            <person name="Hettich R.L."/>
            <person name="Gordon J.I."/>
        </authorList>
    </citation>
    <scope>NUCLEOTIDE SEQUENCE [LARGE SCALE GENOMIC DNA]</scope>
    <source>
        <strain>ATCC 33656 / DSM 3377 / JCM 17463 / KCTC 5835 / LMG 30912 / VPI 0990</strain>
    </source>
</reference>
<protein>
    <recommendedName>
        <fullName evidence="1">Large ribosomal subunit protein uL14</fullName>
    </recommendedName>
    <alternativeName>
        <fullName evidence="2">50S ribosomal protein L14</fullName>
    </alternativeName>
</protein>
<accession>C4ZBS9</accession>
<name>RL14_AGARV</name>
<keyword id="KW-0687">Ribonucleoprotein</keyword>
<keyword id="KW-0689">Ribosomal protein</keyword>
<keyword id="KW-0694">RNA-binding</keyword>
<keyword id="KW-0699">rRNA-binding</keyword>
<dbReference type="EMBL" id="CP001107">
    <property type="protein sequence ID" value="ACR74219.1"/>
    <property type="molecule type" value="Genomic_DNA"/>
</dbReference>
<dbReference type="RefSeq" id="WP_007885948.1">
    <property type="nucleotide sequence ID" value="NZ_CAXSYD010000003.1"/>
</dbReference>
<dbReference type="SMR" id="C4ZBS9"/>
<dbReference type="STRING" id="515619.EUBREC_0428"/>
<dbReference type="PaxDb" id="515619-EUBREC_0428"/>
<dbReference type="GeneID" id="86987338"/>
<dbReference type="KEGG" id="ere:EUBREC_0428"/>
<dbReference type="HOGENOM" id="CLU_095071_2_1_9"/>
<dbReference type="Proteomes" id="UP000001477">
    <property type="component" value="Chromosome"/>
</dbReference>
<dbReference type="GO" id="GO:0022625">
    <property type="term" value="C:cytosolic large ribosomal subunit"/>
    <property type="evidence" value="ECO:0007669"/>
    <property type="project" value="TreeGrafter"/>
</dbReference>
<dbReference type="GO" id="GO:0070180">
    <property type="term" value="F:large ribosomal subunit rRNA binding"/>
    <property type="evidence" value="ECO:0007669"/>
    <property type="project" value="TreeGrafter"/>
</dbReference>
<dbReference type="GO" id="GO:0003735">
    <property type="term" value="F:structural constituent of ribosome"/>
    <property type="evidence" value="ECO:0007669"/>
    <property type="project" value="InterPro"/>
</dbReference>
<dbReference type="GO" id="GO:0006412">
    <property type="term" value="P:translation"/>
    <property type="evidence" value="ECO:0007669"/>
    <property type="project" value="UniProtKB-UniRule"/>
</dbReference>
<dbReference type="CDD" id="cd00337">
    <property type="entry name" value="Ribosomal_uL14"/>
    <property type="match status" value="1"/>
</dbReference>
<dbReference type="FunFam" id="2.40.150.20:FF:000001">
    <property type="entry name" value="50S ribosomal protein L14"/>
    <property type="match status" value="1"/>
</dbReference>
<dbReference type="Gene3D" id="2.40.150.20">
    <property type="entry name" value="Ribosomal protein L14"/>
    <property type="match status" value="1"/>
</dbReference>
<dbReference type="HAMAP" id="MF_01367">
    <property type="entry name" value="Ribosomal_uL14"/>
    <property type="match status" value="1"/>
</dbReference>
<dbReference type="InterPro" id="IPR000218">
    <property type="entry name" value="Ribosomal_uL14"/>
</dbReference>
<dbReference type="InterPro" id="IPR005745">
    <property type="entry name" value="Ribosomal_uL14_bac-type"/>
</dbReference>
<dbReference type="InterPro" id="IPR019972">
    <property type="entry name" value="Ribosomal_uL14_CS"/>
</dbReference>
<dbReference type="InterPro" id="IPR036853">
    <property type="entry name" value="Ribosomal_uL14_sf"/>
</dbReference>
<dbReference type="NCBIfam" id="TIGR01067">
    <property type="entry name" value="rplN_bact"/>
    <property type="match status" value="1"/>
</dbReference>
<dbReference type="PANTHER" id="PTHR11761">
    <property type="entry name" value="50S/60S RIBOSOMAL PROTEIN L14/L23"/>
    <property type="match status" value="1"/>
</dbReference>
<dbReference type="PANTHER" id="PTHR11761:SF3">
    <property type="entry name" value="LARGE RIBOSOMAL SUBUNIT PROTEIN UL14M"/>
    <property type="match status" value="1"/>
</dbReference>
<dbReference type="Pfam" id="PF00238">
    <property type="entry name" value="Ribosomal_L14"/>
    <property type="match status" value="1"/>
</dbReference>
<dbReference type="SMART" id="SM01374">
    <property type="entry name" value="Ribosomal_L14"/>
    <property type="match status" value="1"/>
</dbReference>
<dbReference type="SUPFAM" id="SSF50193">
    <property type="entry name" value="Ribosomal protein L14"/>
    <property type="match status" value="1"/>
</dbReference>
<dbReference type="PROSITE" id="PS00049">
    <property type="entry name" value="RIBOSOMAL_L14"/>
    <property type="match status" value="1"/>
</dbReference>
<organism>
    <name type="scientific">Agathobacter rectalis (strain ATCC 33656 / DSM 3377 / JCM 17463 / KCTC 5835 / VPI 0990)</name>
    <name type="common">Eubacterium rectale</name>
    <dbReference type="NCBI Taxonomy" id="515619"/>
    <lineage>
        <taxon>Bacteria</taxon>
        <taxon>Bacillati</taxon>
        <taxon>Bacillota</taxon>
        <taxon>Clostridia</taxon>
        <taxon>Lachnospirales</taxon>
        <taxon>Lachnospiraceae</taxon>
        <taxon>Agathobacter</taxon>
    </lineage>
</organism>
<gene>
    <name evidence="1" type="primary">rplN</name>
    <name type="ordered locus">EUBREC_0428</name>
</gene>